<name>NTPPA_XANCP</name>
<evidence type="ECO:0000255" key="1">
    <source>
        <dbReference type="HAMAP-Rule" id="MF_00528"/>
    </source>
</evidence>
<organism>
    <name type="scientific">Xanthomonas campestris pv. campestris (strain ATCC 33913 / DSM 3586 / NCPPB 528 / LMG 568 / P 25)</name>
    <dbReference type="NCBI Taxonomy" id="190485"/>
    <lineage>
        <taxon>Bacteria</taxon>
        <taxon>Pseudomonadati</taxon>
        <taxon>Pseudomonadota</taxon>
        <taxon>Gammaproteobacteria</taxon>
        <taxon>Lysobacterales</taxon>
        <taxon>Lysobacteraceae</taxon>
        <taxon>Xanthomonas</taxon>
    </lineage>
</organism>
<gene>
    <name type="ordered locus">XCC2610</name>
</gene>
<accession>Q8P7K1</accession>
<protein>
    <recommendedName>
        <fullName evidence="1">dTTP/UTP pyrophosphatase</fullName>
        <shortName evidence="1">dTTPase/UTPase</shortName>
        <ecNumber evidence="1">3.6.1.9</ecNumber>
    </recommendedName>
    <alternativeName>
        <fullName evidence="1">Nucleoside triphosphate pyrophosphatase</fullName>
    </alternativeName>
    <alternativeName>
        <fullName evidence="1">Nucleotide pyrophosphatase</fullName>
        <shortName evidence="1">Nucleotide PPase</shortName>
    </alternativeName>
</protein>
<proteinExistence type="inferred from homology"/>
<sequence length="190" mass="20309">MLYLASRSPRRHELLQRLDVPFQTLELDVPEVRAPGESPEHYVHRVALDKARAGLALVQADDAQAIVLGSDTEVVLGERVFGKPVDVDDAIAMLTVLAGRTHQVLTAVVLVGAQRPPLQALVVSEVTFDALDATRIAAYAASGEPMGKAGAYAIQGRAERFITHLSGSYSGVMGLPLFQTSQLLTAFGAH</sequence>
<comment type="function">
    <text evidence="1">Nucleoside triphosphate pyrophosphatase that hydrolyzes dTTP and UTP. May have a dual role in cell division arrest and in preventing the incorporation of modified nucleotides into cellular nucleic acids.</text>
</comment>
<comment type="catalytic activity">
    <reaction evidence="1">
        <text>dTTP + H2O = dTMP + diphosphate + H(+)</text>
        <dbReference type="Rhea" id="RHEA:28534"/>
        <dbReference type="ChEBI" id="CHEBI:15377"/>
        <dbReference type="ChEBI" id="CHEBI:15378"/>
        <dbReference type="ChEBI" id="CHEBI:33019"/>
        <dbReference type="ChEBI" id="CHEBI:37568"/>
        <dbReference type="ChEBI" id="CHEBI:63528"/>
        <dbReference type="EC" id="3.6.1.9"/>
    </reaction>
</comment>
<comment type="catalytic activity">
    <reaction evidence="1">
        <text>UTP + H2O = UMP + diphosphate + H(+)</text>
        <dbReference type="Rhea" id="RHEA:29395"/>
        <dbReference type="ChEBI" id="CHEBI:15377"/>
        <dbReference type="ChEBI" id="CHEBI:15378"/>
        <dbReference type="ChEBI" id="CHEBI:33019"/>
        <dbReference type="ChEBI" id="CHEBI:46398"/>
        <dbReference type="ChEBI" id="CHEBI:57865"/>
        <dbReference type="EC" id="3.6.1.9"/>
    </reaction>
</comment>
<comment type="cofactor">
    <cofactor evidence="1">
        <name>a divalent metal cation</name>
        <dbReference type="ChEBI" id="CHEBI:60240"/>
    </cofactor>
</comment>
<comment type="subcellular location">
    <subcellularLocation>
        <location evidence="1">Cytoplasm</location>
    </subcellularLocation>
</comment>
<comment type="similarity">
    <text evidence="1">Belongs to the Maf family. YhdE subfamily.</text>
</comment>
<feature type="chain" id="PRO_0000123078" description="dTTP/UTP pyrophosphatase">
    <location>
        <begin position="1"/>
        <end position="190"/>
    </location>
</feature>
<feature type="active site" description="Proton acceptor" evidence="1">
    <location>
        <position position="71"/>
    </location>
</feature>
<feature type="site" description="Important for substrate specificity" evidence="1">
    <location>
        <position position="10"/>
    </location>
</feature>
<feature type="site" description="Important for substrate specificity" evidence="1">
    <location>
        <position position="72"/>
    </location>
</feature>
<feature type="site" description="Important for substrate specificity" evidence="1">
    <location>
        <position position="155"/>
    </location>
</feature>
<keyword id="KW-0963">Cytoplasm</keyword>
<keyword id="KW-0378">Hydrolase</keyword>
<keyword id="KW-0546">Nucleotide metabolism</keyword>
<keyword id="KW-1185">Reference proteome</keyword>
<reference key="1">
    <citation type="journal article" date="2002" name="Nature">
        <title>Comparison of the genomes of two Xanthomonas pathogens with differing host specificities.</title>
        <authorList>
            <person name="da Silva A.C.R."/>
            <person name="Ferro J.A."/>
            <person name="Reinach F.C."/>
            <person name="Farah C.S."/>
            <person name="Furlan L.R."/>
            <person name="Quaggio R.B."/>
            <person name="Monteiro-Vitorello C.B."/>
            <person name="Van Sluys M.A."/>
            <person name="Almeida N.F. Jr."/>
            <person name="Alves L.M.C."/>
            <person name="do Amaral A.M."/>
            <person name="Bertolini M.C."/>
            <person name="Camargo L.E.A."/>
            <person name="Camarotte G."/>
            <person name="Cannavan F."/>
            <person name="Cardozo J."/>
            <person name="Chambergo F."/>
            <person name="Ciapina L.P."/>
            <person name="Cicarelli R.M.B."/>
            <person name="Coutinho L.L."/>
            <person name="Cursino-Santos J.R."/>
            <person name="El-Dorry H."/>
            <person name="Faria J.B."/>
            <person name="Ferreira A.J.S."/>
            <person name="Ferreira R.C.C."/>
            <person name="Ferro M.I.T."/>
            <person name="Formighieri E.F."/>
            <person name="Franco M.C."/>
            <person name="Greggio C.C."/>
            <person name="Gruber A."/>
            <person name="Katsuyama A.M."/>
            <person name="Kishi L.T."/>
            <person name="Leite R.P."/>
            <person name="Lemos E.G.M."/>
            <person name="Lemos M.V.F."/>
            <person name="Locali E.C."/>
            <person name="Machado M.A."/>
            <person name="Madeira A.M.B.N."/>
            <person name="Martinez-Rossi N.M."/>
            <person name="Martins E.C."/>
            <person name="Meidanis J."/>
            <person name="Menck C.F.M."/>
            <person name="Miyaki C.Y."/>
            <person name="Moon D.H."/>
            <person name="Moreira L.M."/>
            <person name="Novo M.T.M."/>
            <person name="Okura V.K."/>
            <person name="Oliveira M.C."/>
            <person name="Oliveira V.R."/>
            <person name="Pereira H.A."/>
            <person name="Rossi A."/>
            <person name="Sena J.A.D."/>
            <person name="Silva C."/>
            <person name="de Souza R.F."/>
            <person name="Spinola L.A.F."/>
            <person name="Takita M.A."/>
            <person name="Tamura R.E."/>
            <person name="Teixeira E.C."/>
            <person name="Tezza R.I.D."/>
            <person name="Trindade dos Santos M."/>
            <person name="Truffi D."/>
            <person name="Tsai S.M."/>
            <person name="White F.F."/>
            <person name="Setubal J.C."/>
            <person name="Kitajima J.P."/>
        </authorList>
    </citation>
    <scope>NUCLEOTIDE SEQUENCE [LARGE SCALE GENOMIC DNA]</scope>
    <source>
        <strain>ATCC 33913 / DSM 3586 / NCPPB 528 / LMG 568 / P 25</strain>
    </source>
</reference>
<dbReference type="EC" id="3.6.1.9" evidence="1"/>
<dbReference type="EMBL" id="AE008922">
    <property type="protein sequence ID" value="AAM41882.1"/>
    <property type="molecule type" value="Genomic_DNA"/>
</dbReference>
<dbReference type="RefSeq" id="NP_637958.1">
    <property type="nucleotide sequence ID" value="NC_003902.1"/>
</dbReference>
<dbReference type="RefSeq" id="WP_011037740.1">
    <property type="nucleotide sequence ID" value="NC_003902.1"/>
</dbReference>
<dbReference type="SMR" id="Q8P7K1"/>
<dbReference type="STRING" id="190485.XCC2610"/>
<dbReference type="EnsemblBacteria" id="AAM41882">
    <property type="protein sequence ID" value="AAM41882"/>
    <property type="gene ID" value="XCC2610"/>
</dbReference>
<dbReference type="KEGG" id="xcc:XCC2610"/>
<dbReference type="PATRIC" id="fig|190485.4.peg.2779"/>
<dbReference type="eggNOG" id="COG0424">
    <property type="taxonomic scope" value="Bacteria"/>
</dbReference>
<dbReference type="HOGENOM" id="CLU_040416_2_1_6"/>
<dbReference type="OrthoDB" id="9807767at2"/>
<dbReference type="Proteomes" id="UP000001010">
    <property type="component" value="Chromosome"/>
</dbReference>
<dbReference type="GO" id="GO:0005737">
    <property type="term" value="C:cytoplasm"/>
    <property type="evidence" value="ECO:0007669"/>
    <property type="project" value="UniProtKB-SubCell"/>
</dbReference>
<dbReference type="GO" id="GO:0036218">
    <property type="term" value="F:dTTP diphosphatase activity"/>
    <property type="evidence" value="ECO:0007669"/>
    <property type="project" value="RHEA"/>
</dbReference>
<dbReference type="GO" id="GO:0047429">
    <property type="term" value="F:nucleoside triphosphate diphosphatase activity"/>
    <property type="evidence" value="ECO:0000318"/>
    <property type="project" value="GO_Central"/>
</dbReference>
<dbReference type="GO" id="GO:0036221">
    <property type="term" value="F:UTP diphosphatase activity"/>
    <property type="evidence" value="ECO:0007669"/>
    <property type="project" value="RHEA"/>
</dbReference>
<dbReference type="GO" id="GO:0009117">
    <property type="term" value="P:nucleotide metabolic process"/>
    <property type="evidence" value="ECO:0007669"/>
    <property type="project" value="UniProtKB-KW"/>
</dbReference>
<dbReference type="CDD" id="cd00555">
    <property type="entry name" value="Maf"/>
    <property type="match status" value="1"/>
</dbReference>
<dbReference type="Gene3D" id="3.90.950.10">
    <property type="match status" value="1"/>
</dbReference>
<dbReference type="HAMAP" id="MF_00528">
    <property type="entry name" value="Maf"/>
    <property type="match status" value="1"/>
</dbReference>
<dbReference type="InterPro" id="IPR029001">
    <property type="entry name" value="ITPase-like_fam"/>
</dbReference>
<dbReference type="InterPro" id="IPR003697">
    <property type="entry name" value="Maf-like"/>
</dbReference>
<dbReference type="NCBIfam" id="TIGR00172">
    <property type="entry name" value="maf"/>
    <property type="match status" value="1"/>
</dbReference>
<dbReference type="NCBIfam" id="NF003403">
    <property type="entry name" value="PRK04694.1"/>
    <property type="match status" value="1"/>
</dbReference>
<dbReference type="PANTHER" id="PTHR43213">
    <property type="entry name" value="BIFUNCTIONAL DTTP/UTP PYROPHOSPHATASE/METHYLTRANSFERASE PROTEIN-RELATED"/>
    <property type="match status" value="1"/>
</dbReference>
<dbReference type="PANTHER" id="PTHR43213:SF5">
    <property type="entry name" value="BIFUNCTIONAL DTTP_UTP PYROPHOSPHATASE_METHYLTRANSFERASE PROTEIN-RELATED"/>
    <property type="match status" value="1"/>
</dbReference>
<dbReference type="Pfam" id="PF02545">
    <property type="entry name" value="Maf"/>
    <property type="match status" value="1"/>
</dbReference>
<dbReference type="PIRSF" id="PIRSF006305">
    <property type="entry name" value="Maf"/>
    <property type="match status" value="1"/>
</dbReference>
<dbReference type="SUPFAM" id="SSF52972">
    <property type="entry name" value="ITPase-like"/>
    <property type="match status" value="1"/>
</dbReference>